<comment type="function">
    <text evidence="1">A type II topoisomerase that negatively supercoils closed circular double-stranded (ds) DNA in an ATP-dependent manner to modulate DNA topology and maintain chromosomes in an underwound state. Negative supercoiling favors strand separation, and DNA replication, transcription, recombination and repair, all of which involve strand separation. Also able to catalyze the interconversion of other topological isomers of dsDNA rings, including catenanes and knotted rings. Type II topoisomerases break and join 2 DNA strands simultaneously in an ATP-dependent manner.</text>
</comment>
<comment type="catalytic activity">
    <reaction evidence="1">
        <text>ATP-dependent breakage, passage and rejoining of double-stranded DNA.</text>
        <dbReference type="EC" id="5.6.2.2"/>
    </reaction>
</comment>
<comment type="subunit">
    <text evidence="1">Heterotetramer, composed of two GyrA and two GyrB chains. In the heterotetramer, GyrA contains the active site tyrosine that forms a transient covalent intermediate with DNA, while GyrB binds cofactors and catalyzes ATP hydrolysis.</text>
</comment>
<comment type="subcellular location">
    <subcellularLocation>
        <location evidence="1">Cytoplasm</location>
    </subcellularLocation>
</comment>
<comment type="miscellaneous">
    <text evidence="1">Few gyrases are as efficient as E.coli at forming negative supercoils. Not all organisms have 2 type II topoisomerases; in organisms with a single type II topoisomerase this enzyme also has to decatenate newly replicated chromosomes.</text>
</comment>
<comment type="similarity">
    <text evidence="1">Belongs to the type II topoisomerase GyrA/ParC subunit family.</text>
</comment>
<dbReference type="EC" id="5.6.2.2" evidence="1"/>
<dbReference type="EMBL" id="AE002160">
    <property type="protein sequence ID" value="AAF39312.1"/>
    <property type="molecule type" value="Genomic_DNA"/>
</dbReference>
<dbReference type="PIR" id="H81700">
    <property type="entry name" value="H81700"/>
</dbReference>
<dbReference type="RefSeq" id="WP_010230505.1">
    <property type="nucleotide sequence ID" value="NZ_CP063055.1"/>
</dbReference>
<dbReference type="SMR" id="Q9PKK4"/>
<dbReference type="GeneID" id="1245816"/>
<dbReference type="KEGG" id="cmu:TC_0461"/>
<dbReference type="eggNOG" id="COG0188">
    <property type="taxonomic scope" value="Bacteria"/>
</dbReference>
<dbReference type="HOGENOM" id="CLU_002977_6_1_0"/>
<dbReference type="OrthoDB" id="9806486at2"/>
<dbReference type="Proteomes" id="UP000000800">
    <property type="component" value="Chromosome"/>
</dbReference>
<dbReference type="GO" id="GO:0005694">
    <property type="term" value="C:chromosome"/>
    <property type="evidence" value="ECO:0007669"/>
    <property type="project" value="InterPro"/>
</dbReference>
<dbReference type="GO" id="GO:0005737">
    <property type="term" value="C:cytoplasm"/>
    <property type="evidence" value="ECO:0007669"/>
    <property type="project" value="UniProtKB-SubCell"/>
</dbReference>
<dbReference type="GO" id="GO:0009330">
    <property type="term" value="C:DNA topoisomerase type II (double strand cut, ATP-hydrolyzing) complex"/>
    <property type="evidence" value="ECO:0007669"/>
    <property type="project" value="TreeGrafter"/>
</dbReference>
<dbReference type="GO" id="GO:0005524">
    <property type="term" value="F:ATP binding"/>
    <property type="evidence" value="ECO:0007669"/>
    <property type="project" value="UniProtKB-UniRule"/>
</dbReference>
<dbReference type="GO" id="GO:0003677">
    <property type="term" value="F:DNA binding"/>
    <property type="evidence" value="ECO:0007669"/>
    <property type="project" value="UniProtKB-UniRule"/>
</dbReference>
<dbReference type="GO" id="GO:0034335">
    <property type="term" value="F:DNA negative supercoiling activity"/>
    <property type="evidence" value="ECO:0007669"/>
    <property type="project" value="UniProtKB-ARBA"/>
</dbReference>
<dbReference type="GO" id="GO:0006265">
    <property type="term" value="P:DNA topological change"/>
    <property type="evidence" value="ECO:0007669"/>
    <property type="project" value="UniProtKB-UniRule"/>
</dbReference>
<dbReference type="GO" id="GO:0006261">
    <property type="term" value="P:DNA-templated DNA replication"/>
    <property type="evidence" value="ECO:0007669"/>
    <property type="project" value="UniProtKB-UniRule"/>
</dbReference>
<dbReference type="CDD" id="cd00187">
    <property type="entry name" value="TOP4c"/>
    <property type="match status" value="1"/>
</dbReference>
<dbReference type="FunFam" id="1.10.268.10:FF:000001">
    <property type="entry name" value="DNA gyrase subunit A"/>
    <property type="match status" value="1"/>
</dbReference>
<dbReference type="FunFam" id="3.30.1360.40:FF:000002">
    <property type="entry name" value="DNA gyrase subunit A"/>
    <property type="match status" value="1"/>
</dbReference>
<dbReference type="FunFam" id="2.120.10.90:FF:000005">
    <property type="entry name" value="DNA topoisomerase 4 subunit A"/>
    <property type="match status" value="1"/>
</dbReference>
<dbReference type="Gene3D" id="3.30.1360.40">
    <property type="match status" value="1"/>
</dbReference>
<dbReference type="Gene3D" id="2.120.10.90">
    <property type="entry name" value="DNA gyrase/topoisomerase IV, subunit A, C-terminal"/>
    <property type="match status" value="1"/>
</dbReference>
<dbReference type="Gene3D" id="3.90.199.10">
    <property type="entry name" value="Topoisomerase II, domain 5"/>
    <property type="match status" value="1"/>
</dbReference>
<dbReference type="Gene3D" id="1.10.268.10">
    <property type="entry name" value="Topoisomerase, domain 3"/>
    <property type="match status" value="1"/>
</dbReference>
<dbReference type="HAMAP" id="MF_01897">
    <property type="entry name" value="GyrA"/>
    <property type="match status" value="1"/>
</dbReference>
<dbReference type="InterPro" id="IPR005743">
    <property type="entry name" value="GyrA"/>
</dbReference>
<dbReference type="InterPro" id="IPR006691">
    <property type="entry name" value="GyrA/parC_rep"/>
</dbReference>
<dbReference type="InterPro" id="IPR035516">
    <property type="entry name" value="Gyrase/topoIV_suA_C"/>
</dbReference>
<dbReference type="InterPro" id="IPR013760">
    <property type="entry name" value="Topo_IIA-like_dom_sf"/>
</dbReference>
<dbReference type="InterPro" id="IPR013758">
    <property type="entry name" value="Topo_IIA_A/C_ab"/>
</dbReference>
<dbReference type="InterPro" id="IPR013757">
    <property type="entry name" value="Topo_IIA_A_a_sf"/>
</dbReference>
<dbReference type="InterPro" id="IPR002205">
    <property type="entry name" value="Topo_IIA_dom_A"/>
</dbReference>
<dbReference type="InterPro" id="IPR050220">
    <property type="entry name" value="Type_II_DNA_Topoisomerases"/>
</dbReference>
<dbReference type="NCBIfam" id="TIGR01063">
    <property type="entry name" value="gyrA"/>
    <property type="match status" value="1"/>
</dbReference>
<dbReference type="NCBIfam" id="NF004043">
    <property type="entry name" value="PRK05560.1"/>
    <property type="match status" value="1"/>
</dbReference>
<dbReference type="NCBIfam" id="NF004044">
    <property type="entry name" value="PRK05561.1"/>
    <property type="match status" value="1"/>
</dbReference>
<dbReference type="PANTHER" id="PTHR43493:SF5">
    <property type="entry name" value="DNA GYRASE SUBUNIT A, CHLOROPLASTIC_MITOCHONDRIAL"/>
    <property type="match status" value="1"/>
</dbReference>
<dbReference type="PANTHER" id="PTHR43493">
    <property type="entry name" value="DNA GYRASE/TOPOISOMERASE SUBUNIT A"/>
    <property type="match status" value="1"/>
</dbReference>
<dbReference type="Pfam" id="PF03989">
    <property type="entry name" value="DNA_gyraseA_C"/>
    <property type="match status" value="6"/>
</dbReference>
<dbReference type="Pfam" id="PF00521">
    <property type="entry name" value="DNA_topoisoIV"/>
    <property type="match status" value="1"/>
</dbReference>
<dbReference type="SMART" id="SM00434">
    <property type="entry name" value="TOP4c"/>
    <property type="match status" value="1"/>
</dbReference>
<dbReference type="SUPFAM" id="SSF101904">
    <property type="entry name" value="GyrA/ParC C-terminal domain-like"/>
    <property type="match status" value="1"/>
</dbReference>
<dbReference type="SUPFAM" id="SSF56719">
    <property type="entry name" value="Type II DNA topoisomerase"/>
    <property type="match status" value="1"/>
</dbReference>
<dbReference type="PROSITE" id="PS52040">
    <property type="entry name" value="TOPO_IIA"/>
    <property type="match status" value="1"/>
</dbReference>
<keyword id="KW-0067">ATP-binding</keyword>
<keyword id="KW-0963">Cytoplasm</keyword>
<keyword id="KW-0238">DNA-binding</keyword>
<keyword id="KW-0413">Isomerase</keyword>
<keyword id="KW-0547">Nucleotide-binding</keyword>
<keyword id="KW-0799">Topoisomerase</keyword>
<organism>
    <name type="scientific">Chlamydia muridarum (strain MoPn / Nigg)</name>
    <dbReference type="NCBI Taxonomy" id="243161"/>
    <lineage>
        <taxon>Bacteria</taxon>
        <taxon>Pseudomonadati</taxon>
        <taxon>Chlamydiota</taxon>
        <taxon>Chlamydiia</taxon>
        <taxon>Chlamydiales</taxon>
        <taxon>Chlamydiaceae</taxon>
        <taxon>Chlamydia/Chlamydophila group</taxon>
        <taxon>Chlamydia</taxon>
    </lineage>
</organism>
<protein>
    <recommendedName>
        <fullName evidence="1">DNA gyrase subunit A</fullName>
        <ecNumber evidence="1">5.6.2.2</ecNumber>
    </recommendedName>
</protein>
<accession>Q9PKK4</accession>
<proteinExistence type="inferred from homology"/>
<name>GYRA_CHLMU</name>
<sequence>MLNKEEIIVPKNLEEEMKESYLRYSMSVIISRALPDVRDGLKPSQRRILYAMKQLNLTPGAKHRKCAKICGDTSGDYHPHGEAVIYPTLVRMAQDWAMRYPLVDGQGNFGSIDGDPAAAMRYTEARLTHSSIFLLEDLDKDTVDMVPNYDETKYEPVVFPSKFPNLLCNGSSGIAVGMATNIPPHNLGELIEATLLVLANPQTSIEEILEVMPGPDFPTGGIICGTEGIRSTYYTGRGKLRLRARIHVEENSDKQRENIILTEMPYNVNKSRLVEQIAELINEKTLTGISDVRDESDKDGIRVVLELKKGESSEVIINRLYKFTDVQVTFGANMLALDKNLPRTMSIHRMISAWIRHRMDVIRRRTRYELNKAETRAHILEGFLKALSCMDEVVKTIRESSNKEHAKQQLVELFGFSEAQSLAILELRLYQLTGLEIDKVQKEYNELLEKIAYYRRVLAEEELVKDIIREELQELHKVHKTPRRTTIEMDAGDVRDIEDIIADESVIITISGDDYVKRMPVKVFREQKRGGQGVTGFDMKKGSDFLKAVYSASTKDYLLIFTNMGQCYWLKVWQLPEGERRAKGKPIINFLEGIRPGEQVAAVLNVKRFEQGEYLLLATKKGVVKKVSLDAFGSPRKKGIRALEIDDGDELIAARHIVNDEEKVMLFTRLGMAVRFPHDKVRPMGRAARGVRGVSLKNEEDFVVSCQVVTDDQSVLVVCDNGFGKRSLVCDFRETNRGSVGVRSILINQRNGDVLGAISVTDFDSILLMSAQGQAIRINMQDVRVMGRATQGVRLVNLREGDTLVAMEKLSVNTESGETEESVSIQVGHAVEE</sequence>
<feature type="chain" id="PRO_0000145228" description="DNA gyrase subunit A">
    <location>
        <begin position="1"/>
        <end position="833"/>
    </location>
</feature>
<feature type="domain" description="Topo IIA-type catalytic" evidence="2">
    <location>
        <begin position="34"/>
        <end position="500"/>
    </location>
</feature>
<feature type="short sequence motif" description="GyrA-box" evidence="1">
    <location>
        <begin position="527"/>
        <end position="533"/>
    </location>
</feature>
<feature type="active site" description="O-(5'-phospho-DNA)-tyrosine intermediate" evidence="1">
    <location>
        <position position="122"/>
    </location>
</feature>
<evidence type="ECO:0000255" key="1">
    <source>
        <dbReference type="HAMAP-Rule" id="MF_01897"/>
    </source>
</evidence>
<evidence type="ECO:0000255" key="2">
    <source>
        <dbReference type="PROSITE-ProRule" id="PRU01384"/>
    </source>
</evidence>
<gene>
    <name evidence="1" type="primary">gyrA</name>
    <name type="ordered locus">TC_0461</name>
</gene>
<reference key="1">
    <citation type="journal article" date="2000" name="Nucleic Acids Res.">
        <title>Genome sequences of Chlamydia trachomatis MoPn and Chlamydia pneumoniae AR39.</title>
        <authorList>
            <person name="Read T.D."/>
            <person name="Brunham R.C."/>
            <person name="Shen C."/>
            <person name="Gill S.R."/>
            <person name="Heidelberg J.F."/>
            <person name="White O."/>
            <person name="Hickey E.K."/>
            <person name="Peterson J.D."/>
            <person name="Utterback T.R."/>
            <person name="Berry K.J."/>
            <person name="Bass S."/>
            <person name="Linher K.D."/>
            <person name="Weidman J.F."/>
            <person name="Khouri H.M."/>
            <person name="Craven B."/>
            <person name="Bowman C."/>
            <person name="Dodson R.J."/>
            <person name="Gwinn M.L."/>
            <person name="Nelson W.C."/>
            <person name="DeBoy R.T."/>
            <person name="Kolonay J.F."/>
            <person name="McClarty G."/>
            <person name="Salzberg S.L."/>
            <person name="Eisen J.A."/>
            <person name="Fraser C.M."/>
        </authorList>
    </citation>
    <scope>NUCLEOTIDE SEQUENCE [LARGE SCALE GENOMIC DNA]</scope>
    <source>
        <strain>MoPn / Nigg</strain>
    </source>
</reference>